<feature type="chain" id="PRO_1000063587" description="3-isopropylmalate dehydratase large subunit">
    <location>
        <begin position="1"/>
        <end position="469"/>
    </location>
</feature>
<feature type="region of interest" description="Disordered" evidence="2">
    <location>
        <begin position="424"/>
        <end position="443"/>
    </location>
</feature>
<feature type="compositionally biased region" description="Polar residues" evidence="2">
    <location>
        <begin position="424"/>
        <end position="441"/>
    </location>
</feature>
<feature type="binding site" evidence="1">
    <location>
        <position position="347"/>
    </location>
    <ligand>
        <name>[4Fe-4S] cluster</name>
        <dbReference type="ChEBI" id="CHEBI:49883"/>
    </ligand>
</feature>
<feature type="binding site" evidence="1">
    <location>
        <position position="407"/>
    </location>
    <ligand>
        <name>[4Fe-4S] cluster</name>
        <dbReference type="ChEBI" id="CHEBI:49883"/>
    </ligand>
</feature>
<feature type="binding site" evidence="1">
    <location>
        <position position="410"/>
    </location>
    <ligand>
        <name>[4Fe-4S] cluster</name>
        <dbReference type="ChEBI" id="CHEBI:49883"/>
    </ligand>
</feature>
<evidence type="ECO:0000255" key="1">
    <source>
        <dbReference type="HAMAP-Rule" id="MF_01026"/>
    </source>
</evidence>
<evidence type="ECO:0000256" key="2">
    <source>
        <dbReference type="SAM" id="MobiDB-lite"/>
    </source>
</evidence>
<dbReference type="EC" id="4.2.1.33" evidence="1"/>
<dbReference type="EMBL" id="CP000111">
    <property type="protein sequence ID" value="ABB49319.1"/>
    <property type="molecule type" value="Genomic_DNA"/>
</dbReference>
<dbReference type="RefSeq" id="WP_011375821.1">
    <property type="nucleotide sequence ID" value="NC_007577.1"/>
</dbReference>
<dbReference type="SMR" id="Q31CS6"/>
<dbReference type="STRING" id="74546.PMT9312_0258"/>
<dbReference type="KEGG" id="pmi:PMT9312_0258"/>
<dbReference type="eggNOG" id="COG0065">
    <property type="taxonomic scope" value="Bacteria"/>
</dbReference>
<dbReference type="HOGENOM" id="CLU_006714_3_4_3"/>
<dbReference type="OrthoDB" id="9802769at2"/>
<dbReference type="UniPathway" id="UPA00048">
    <property type="reaction ID" value="UER00071"/>
</dbReference>
<dbReference type="Proteomes" id="UP000002715">
    <property type="component" value="Chromosome"/>
</dbReference>
<dbReference type="GO" id="GO:0003861">
    <property type="term" value="F:3-isopropylmalate dehydratase activity"/>
    <property type="evidence" value="ECO:0007669"/>
    <property type="project" value="UniProtKB-UniRule"/>
</dbReference>
<dbReference type="GO" id="GO:0051539">
    <property type="term" value="F:4 iron, 4 sulfur cluster binding"/>
    <property type="evidence" value="ECO:0007669"/>
    <property type="project" value="UniProtKB-KW"/>
</dbReference>
<dbReference type="GO" id="GO:0046872">
    <property type="term" value="F:metal ion binding"/>
    <property type="evidence" value="ECO:0007669"/>
    <property type="project" value="UniProtKB-KW"/>
</dbReference>
<dbReference type="GO" id="GO:0009098">
    <property type="term" value="P:L-leucine biosynthetic process"/>
    <property type="evidence" value="ECO:0007669"/>
    <property type="project" value="UniProtKB-UniRule"/>
</dbReference>
<dbReference type="CDD" id="cd01583">
    <property type="entry name" value="IPMI"/>
    <property type="match status" value="1"/>
</dbReference>
<dbReference type="Gene3D" id="3.30.499.10">
    <property type="entry name" value="Aconitase, domain 3"/>
    <property type="match status" value="2"/>
</dbReference>
<dbReference type="HAMAP" id="MF_01026">
    <property type="entry name" value="LeuC_type1"/>
    <property type="match status" value="1"/>
</dbReference>
<dbReference type="InterPro" id="IPR004430">
    <property type="entry name" value="3-IsopropMal_deHydase_lsu"/>
</dbReference>
<dbReference type="InterPro" id="IPR015931">
    <property type="entry name" value="Acnase/IPM_dHydase_lsu_aba_1/3"/>
</dbReference>
<dbReference type="InterPro" id="IPR001030">
    <property type="entry name" value="Acoase/IPM_deHydtase_lsu_aba"/>
</dbReference>
<dbReference type="InterPro" id="IPR018136">
    <property type="entry name" value="Aconitase_4Fe-4S_BS"/>
</dbReference>
<dbReference type="InterPro" id="IPR036008">
    <property type="entry name" value="Aconitase_4Fe-4S_dom"/>
</dbReference>
<dbReference type="InterPro" id="IPR050067">
    <property type="entry name" value="IPM_dehydratase_rel_enz"/>
</dbReference>
<dbReference type="InterPro" id="IPR033941">
    <property type="entry name" value="IPMI_cat"/>
</dbReference>
<dbReference type="NCBIfam" id="TIGR00170">
    <property type="entry name" value="leuC"/>
    <property type="match status" value="1"/>
</dbReference>
<dbReference type="NCBIfam" id="NF004016">
    <property type="entry name" value="PRK05478.1"/>
    <property type="match status" value="1"/>
</dbReference>
<dbReference type="NCBIfam" id="NF009116">
    <property type="entry name" value="PRK12466.1"/>
    <property type="match status" value="1"/>
</dbReference>
<dbReference type="PANTHER" id="PTHR43822:SF9">
    <property type="entry name" value="3-ISOPROPYLMALATE DEHYDRATASE"/>
    <property type="match status" value="1"/>
</dbReference>
<dbReference type="PANTHER" id="PTHR43822">
    <property type="entry name" value="HOMOACONITASE, MITOCHONDRIAL-RELATED"/>
    <property type="match status" value="1"/>
</dbReference>
<dbReference type="Pfam" id="PF00330">
    <property type="entry name" value="Aconitase"/>
    <property type="match status" value="1"/>
</dbReference>
<dbReference type="PRINTS" id="PR00415">
    <property type="entry name" value="ACONITASE"/>
</dbReference>
<dbReference type="SUPFAM" id="SSF53732">
    <property type="entry name" value="Aconitase iron-sulfur domain"/>
    <property type="match status" value="1"/>
</dbReference>
<dbReference type="PROSITE" id="PS00450">
    <property type="entry name" value="ACONITASE_1"/>
    <property type="match status" value="1"/>
</dbReference>
<dbReference type="PROSITE" id="PS01244">
    <property type="entry name" value="ACONITASE_2"/>
    <property type="match status" value="1"/>
</dbReference>
<accession>Q31CS6</accession>
<organism>
    <name type="scientific">Prochlorococcus marinus (strain MIT 9312)</name>
    <dbReference type="NCBI Taxonomy" id="74546"/>
    <lineage>
        <taxon>Bacteria</taxon>
        <taxon>Bacillati</taxon>
        <taxon>Cyanobacteriota</taxon>
        <taxon>Cyanophyceae</taxon>
        <taxon>Synechococcales</taxon>
        <taxon>Prochlorococcaceae</taxon>
        <taxon>Prochlorococcus</taxon>
    </lineage>
</organism>
<proteinExistence type="inferred from homology"/>
<comment type="function">
    <text evidence="1">Catalyzes the isomerization between 2-isopropylmalate and 3-isopropylmalate, via the formation of 2-isopropylmaleate.</text>
</comment>
<comment type="catalytic activity">
    <reaction evidence="1">
        <text>(2R,3S)-3-isopropylmalate = (2S)-2-isopropylmalate</text>
        <dbReference type="Rhea" id="RHEA:32287"/>
        <dbReference type="ChEBI" id="CHEBI:1178"/>
        <dbReference type="ChEBI" id="CHEBI:35121"/>
        <dbReference type="EC" id="4.2.1.33"/>
    </reaction>
</comment>
<comment type="cofactor">
    <cofactor evidence="1">
        <name>[4Fe-4S] cluster</name>
        <dbReference type="ChEBI" id="CHEBI:49883"/>
    </cofactor>
    <text evidence="1">Binds 1 [4Fe-4S] cluster per subunit.</text>
</comment>
<comment type="pathway">
    <text evidence="1">Amino-acid biosynthesis; L-leucine biosynthesis; L-leucine from 3-methyl-2-oxobutanoate: step 2/4.</text>
</comment>
<comment type="subunit">
    <text evidence="1">Heterodimer of LeuC and LeuD.</text>
</comment>
<comment type="similarity">
    <text evidence="1">Belongs to the aconitase/IPM isomerase family. LeuC type 1 subfamily.</text>
</comment>
<protein>
    <recommendedName>
        <fullName evidence="1">3-isopropylmalate dehydratase large subunit</fullName>
        <ecNumber evidence="1">4.2.1.33</ecNumber>
    </recommendedName>
    <alternativeName>
        <fullName evidence="1">Alpha-IPM isomerase</fullName>
        <shortName evidence="1">IPMI</shortName>
    </alternativeName>
    <alternativeName>
        <fullName evidence="1">Isopropylmalate isomerase</fullName>
    </alternativeName>
</protein>
<keyword id="KW-0004">4Fe-4S</keyword>
<keyword id="KW-0028">Amino-acid biosynthesis</keyword>
<keyword id="KW-0100">Branched-chain amino acid biosynthesis</keyword>
<keyword id="KW-0408">Iron</keyword>
<keyword id="KW-0411">Iron-sulfur</keyword>
<keyword id="KW-0432">Leucine biosynthesis</keyword>
<keyword id="KW-0456">Lyase</keyword>
<keyword id="KW-0479">Metal-binding</keyword>
<sequence>MSQNTLFDKVWDLHKVSSLPGGSDQIFIGLHLIHEVTSPQAFGALKDKNLKVKFPSRTVATVDHIVPTDNQSRPFKDNLAEQMIETLENNCLQHKIKFFNIGSGNQGIVHVVAPELGLTQPGMTIACGDSHTSTHGAFGSIAFGIGTSQVRDVLATQTIAMNKLKVRQIWCENNLSNGVYAKDLVLHIINELGVKAGVGFAYEFAGPAIDELSMEERMTICNMSIEGGARCGYINPDEKTFSYIKNRLYAPKHTQWDKALLWWKSLKSDENSIYDDVIKLDASKVEPTVTWGITPGQSLGINQLIPLLDDLPPNDQFIAEEAFEYMGFMPGQSIKDTPVDVCFIGSCTNGRISDLRVAAKILKDKKVSKKVKAFVVPGSEKVATEAKEEGLDKIFKDSGFQWREPGCSMCLAMNSDKLIGNQVSASSSNRNFKGRQGSPSGRTLLMSPAMVAAAAINGKVSDVREFINK</sequence>
<gene>
    <name evidence="1" type="primary">leuC</name>
    <name type="ordered locus">PMT9312_0258</name>
</gene>
<name>LEUC_PROM9</name>
<reference key="1">
    <citation type="journal article" date="2006" name="Science">
        <title>Genomic islands and the ecology and evolution of Prochlorococcus.</title>
        <authorList>
            <person name="Coleman M.L."/>
            <person name="Sullivan M.B."/>
            <person name="Martiny A.C."/>
            <person name="Steglich C."/>
            <person name="Barry K."/>
            <person name="Delong E.F."/>
            <person name="Chisholm S.W."/>
        </authorList>
    </citation>
    <scope>NUCLEOTIDE SEQUENCE [LARGE SCALE GENOMIC DNA]</scope>
    <source>
        <strain>MIT 9312</strain>
    </source>
</reference>